<reference key="1">
    <citation type="journal article" date="2010" name="Science">
        <title>The genome of the Western clawed frog Xenopus tropicalis.</title>
        <authorList>
            <person name="Hellsten U."/>
            <person name="Harland R.M."/>
            <person name="Gilchrist M.J."/>
            <person name="Hendrix D."/>
            <person name="Jurka J."/>
            <person name="Kapitonov V."/>
            <person name="Ovcharenko I."/>
            <person name="Putnam N.H."/>
            <person name="Shu S."/>
            <person name="Taher L."/>
            <person name="Blitz I.L."/>
            <person name="Blumberg B."/>
            <person name="Dichmann D.S."/>
            <person name="Dubchak I."/>
            <person name="Amaya E."/>
            <person name="Detter J.C."/>
            <person name="Fletcher R."/>
            <person name="Gerhard D.S."/>
            <person name="Goodstein D."/>
            <person name="Graves T."/>
            <person name="Grigoriev I.V."/>
            <person name="Grimwood J."/>
            <person name="Kawashima T."/>
            <person name="Lindquist E."/>
            <person name="Lucas S.M."/>
            <person name="Mead P.E."/>
            <person name="Mitros T."/>
            <person name="Ogino H."/>
            <person name="Ohta Y."/>
            <person name="Poliakov A.V."/>
            <person name="Pollet N."/>
            <person name="Robert J."/>
            <person name="Salamov A."/>
            <person name="Sater A.K."/>
            <person name="Schmutz J."/>
            <person name="Terry A."/>
            <person name="Vize P.D."/>
            <person name="Warren W.C."/>
            <person name="Wells D."/>
            <person name="Wills A."/>
            <person name="Wilson R.K."/>
            <person name="Zimmerman L.B."/>
            <person name="Zorn A.M."/>
            <person name="Grainger R."/>
            <person name="Grammer T."/>
            <person name="Khokha M.K."/>
            <person name="Richardson P.M."/>
            <person name="Rokhsar D.S."/>
        </authorList>
    </citation>
    <scope>NUCLEOTIDE SEQUENCE [LARGE SCALE GENOMIC DNA]</scope>
</reference>
<reference key="2">
    <citation type="submission" date="2008-07" db="EMBL/GenBank/DDBJ databases">
        <authorList>
            <consortium name="NIH - Xenopus Gene Collection (XGC) project"/>
        </authorList>
    </citation>
    <scope>NUCLEOTIDE SEQUENCE [LARGE SCALE MRNA]</scope>
    <source>
        <tissue>Embryo</tissue>
    </source>
</reference>
<proteinExistence type="evidence at transcript level"/>
<organism>
    <name type="scientific">Xenopus tropicalis</name>
    <name type="common">Western clawed frog</name>
    <name type="synonym">Silurana tropicalis</name>
    <dbReference type="NCBI Taxonomy" id="8364"/>
    <lineage>
        <taxon>Eukaryota</taxon>
        <taxon>Metazoa</taxon>
        <taxon>Chordata</taxon>
        <taxon>Craniata</taxon>
        <taxon>Vertebrata</taxon>
        <taxon>Euteleostomi</taxon>
        <taxon>Amphibia</taxon>
        <taxon>Batrachia</taxon>
        <taxon>Anura</taxon>
        <taxon>Pipoidea</taxon>
        <taxon>Pipidae</taxon>
        <taxon>Xenopodinae</taxon>
        <taxon>Xenopus</taxon>
        <taxon>Silurana</taxon>
    </lineage>
</organism>
<accession>B4F6J6</accession>
<accession>F7CNN7</accession>
<name>ATAD1_XENTR</name>
<dbReference type="EC" id="7.4.2.-" evidence="1 2"/>
<dbReference type="EMBL" id="AAMC01046255">
    <property type="status" value="NOT_ANNOTATED_CDS"/>
    <property type="molecule type" value="Genomic_DNA"/>
</dbReference>
<dbReference type="EMBL" id="BC167903">
    <property type="protein sequence ID" value="AAI67903.1"/>
    <property type="molecule type" value="mRNA"/>
</dbReference>
<dbReference type="RefSeq" id="NP_001135501.1">
    <property type="nucleotide sequence ID" value="NM_001142029.1"/>
</dbReference>
<dbReference type="RefSeq" id="XP_012821650.1">
    <property type="nucleotide sequence ID" value="XM_012966196.3"/>
</dbReference>
<dbReference type="SMR" id="B4F6J6"/>
<dbReference type="FunCoup" id="B4F6J6">
    <property type="interactions" value="1723"/>
</dbReference>
<dbReference type="STRING" id="8364.ENSXETP00000032212"/>
<dbReference type="PaxDb" id="8364-ENSXETP00000020353"/>
<dbReference type="GeneID" id="100216041"/>
<dbReference type="KEGG" id="xtr:100216041"/>
<dbReference type="AGR" id="Xenbase:XB-GENE-5779938"/>
<dbReference type="CTD" id="84896"/>
<dbReference type="Xenbase" id="XB-GENE-5779938">
    <property type="gene designation" value="atad1"/>
</dbReference>
<dbReference type="eggNOG" id="KOG0737">
    <property type="taxonomic scope" value="Eukaryota"/>
</dbReference>
<dbReference type="HOGENOM" id="CLU_000688_21_14_1"/>
<dbReference type="InParanoid" id="B4F6J6"/>
<dbReference type="OrthoDB" id="10254455at2759"/>
<dbReference type="PhylomeDB" id="B4F6J6"/>
<dbReference type="Reactome" id="R-XTR-9603798">
    <property type="pathway name" value="Class I peroxisomal membrane protein import"/>
</dbReference>
<dbReference type="Proteomes" id="UP000008143">
    <property type="component" value="Chromosome 7"/>
</dbReference>
<dbReference type="Bgee" id="ENSXETG00000009266">
    <property type="expression patterns" value="Expressed in 4-cell stage embryo and 13 other cell types or tissues"/>
</dbReference>
<dbReference type="ExpressionAtlas" id="B4F6J6">
    <property type="expression patterns" value="baseline"/>
</dbReference>
<dbReference type="GO" id="GO:0005741">
    <property type="term" value="C:mitochondrial outer membrane"/>
    <property type="evidence" value="ECO:0000250"/>
    <property type="project" value="UniProtKB"/>
</dbReference>
<dbReference type="GO" id="GO:0005778">
    <property type="term" value="C:peroxisomal membrane"/>
    <property type="evidence" value="ECO:0000250"/>
    <property type="project" value="UniProtKB"/>
</dbReference>
<dbReference type="GO" id="GO:0045211">
    <property type="term" value="C:postsynaptic membrane"/>
    <property type="evidence" value="ECO:0007669"/>
    <property type="project" value="UniProtKB-SubCell"/>
</dbReference>
<dbReference type="GO" id="GO:0005524">
    <property type="term" value="F:ATP binding"/>
    <property type="evidence" value="ECO:0007669"/>
    <property type="project" value="UniProtKB-KW"/>
</dbReference>
<dbReference type="GO" id="GO:0016887">
    <property type="term" value="F:ATP hydrolysis activity"/>
    <property type="evidence" value="ECO:0007669"/>
    <property type="project" value="InterPro"/>
</dbReference>
<dbReference type="GO" id="GO:0140567">
    <property type="term" value="F:membrane protein dislocase activity"/>
    <property type="evidence" value="ECO:0007669"/>
    <property type="project" value="RHEA"/>
</dbReference>
<dbReference type="GO" id="GO:0140570">
    <property type="term" value="P:extraction of mislocalized protein from mitochondrial outer membrane"/>
    <property type="evidence" value="ECO:0000250"/>
    <property type="project" value="UniProtKB"/>
</dbReference>
<dbReference type="CDD" id="cd19520">
    <property type="entry name" value="RecA-like_ATAD1"/>
    <property type="match status" value="1"/>
</dbReference>
<dbReference type="FunFam" id="3.40.50.300:FF:000538">
    <property type="entry name" value="ATPase family AAA domain-containing protein 1"/>
    <property type="match status" value="1"/>
</dbReference>
<dbReference type="Gene3D" id="1.10.8.60">
    <property type="match status" value="1"/>
</dbReference>
<dbReference type="Gene3D" id="3.40.50.300">
    <property type="entry name" value="P-loop containing nucleotide triphosphate hydrolases"/>
    <property type="match status" value="1"/>
</dbReference>
<dbReference type="InterPro" id="IPR003593">
    <property type="entry name" value="AAA+_ATPase"/>
</dbReference>
<dbReference type="InterPro" id="IPR041569">
    <property type="entry name" value="AAA_lid_3"/>
</dbReference>
<dbReference type="InterPro" id="IPR003959">
    <property type="entry name" value="ATPase_AAA_core"/>
</dbReference>
<dbReference type="InterPro" id="IPR003960">
    <property type="entry name" value="ATPase_AAA_CS"/>
</dbReference>
<dbReference type="InterPro" id="IPR051701">
    <property type="entry name" value="Mito_OM_Translocase_MSP1"/>
</dbReference>
<dbReference type="InterPro" id="IPR027417">
    <property type="entry name" value="P-loop_NTPase"/>
</dbReference>
<dbReference type="PANTHER" id="PTHR45644">
    <property type="entry name" value="AAA ATPASE, PUTATIVE (AFU_ORTHOLOGUE AFUA_2G12920)-RELATED-RELATED"/>
    <property type="match status" value="1"/>
</dbReference>
<dbReference type="PANTHER" id="PTHR45644:SF2">
    <property type="entry name" value="OUTER MITOCHONDRIAL TRANSMEMBRANE HELIX TRANSLOCASE"/>
    <property type="match status" value="1"/>
</dbReference>
<dbReference type="Pfam" id="PF00004">
    <property type="entry name" value="AAA"/>
    <property type="match status" value="1"/>
</dbReference>
<dbReference type="Pfam" id="PF17862">
    <property type="entry name" value="AAA_lid_3"/>
    <property type="match status" value="1"/>
</dbReference>
<dbReference type="SMART" id="SM00382">
    <property type="entry name" value="AAA"/>
    <property type="match status" value="1"/>
</dbReference>
<dbReference type="SUPFAM" id="SSF52540">
    <property type="entry name" value="P-loop containing nucleoside triphosphate hydrolases"/>
    <property type="match status" value="1"/>
</dbReference>
<dbReference type="PROSITE" id="PS00674">
    <property type="entry name" value="AAA"/>
    <property type="match status" value="1"/>
</dbReference>
<protein>
    <recommendedName>
        <fullName evidence="5">Outer mitochondrial transmembrane helix translocase</fullName>
        <ecNumber evidence="1 2">7.4.2.-</ecNumber>
    </recommendedName>
    <alternativeName>
        <fullName evidence="5">ATPase family AAA domain-containing protein 1</fullName>
    </alternativeName>
</protein>
<evidence type="ECO:0000250" key="1">
    <source>
        <dbReference type="UniProtKB" id="P28737"/>
    </source>
</evidence>
<evidence type="ECO:0000250" key="2">
    <source>
        <dbReference type="UniProtKB" id="Q8NBU5"/>
    </source>
</evidence>
<evidence type="ECO:0000250" key="3">
    <source>
        <dbReference type="UniProtKB" id="Q9D5T0"/>
    </source>
</evidence>
<evidence type="ECO:0000255" key="4"/>
<evidence type="ECO:0000305" key="5"/>
<keyword id="KW-0067">ATP-binding</keyword>
<keyword id="KW-1003">Cell membrane</keyword>
<keyword id="KW-0472">Membrane</keyword>
<keyword id="KW-0496">Mitochondrion</keyword>
<keyword id="KW-1000">Mitochondrion outer membrane</keyword>
<keyword id="KW-0547">Nucleotide-binding</keyword>
<keyword id="KW-0576">Peroxisome</keyword>
<keyword id="KW-0628">Postsynaptic cell membrane</keyword>
<keyword id="KW-1185">Reference proteome</keyword>
<keyword id="KW-0770">Synapse</keyword>
<keyword id="KW-1278">Translocase</keyword>
<keyword id="KW-0812">Transmembrane</keyword>
<keyword id="KW-1133">Transmembrane helix</keyword>
<comment type="function">
    <text evidence="1 2 3">Outer mitochondrial translocase required to remove mislocalized tail-anchored transmembrane proteins on mitochondria (By similarity). Specifically recognizes and binds tail-anchored transmembrane proteins: acts as a dislocase that mediates the ATP-dependent extraction of mistargeted tail-anchored transmembrane proteins from the mitochondrion outer membrane (By similarity). Also plays a critical role in regulating the surface expression of AMPA receptors (AMPAR), thereby regulating synaptic plasticity and learning and memory (By similarity).</text>
</comment>
<comment type="catalytic activity">
    <reaction evidence="1 2">
        <text>[protein]-with a C-terminal TM segment(out) + ATP + H2O = [protein]-with a C-terminal TM segment(in) + ADP + phosphate + H(+)</text>
        <dbReference type="Rhea" id="RHEA:66168"/>
        <dbReference type="Rhea" id="RHEA-COMP:16963"/>
        <dbReference type="ChEBI" id="CHEBI:15377"/>
        <dbReference type="ChEBI" id="CHEBI:15378"/>
        <dbReference type="ChEBI" id="CHEBI:30616"/>
        <dbReference type="ChEBI" id="CHEBI:43474"/>
        <dbReference type="ChEBI" id="CHEBI:90782"/>
        <dbReference type="ChEBI" id="CHEBI:456216"/>
    </reaction>
</comment>
<comment type="subcellular location">
    <subcellularLocation>
        <location evidence="2">Mitochondrion outer membrane</location>
        <topology evidence="4">Single-pass membrane protein</topology>
    </subcellularLocation>
    <subcellularLocation>
        <location evidence="2">Peroxisome membrane</location>
        <topology evidence="4">Single-pass membrane protein</topology>
    </subcellularLocation>
    <subcellularLocation>
        <location evidence="3">Postsynaptic cell membrane</location>
        <topology evidence="4">Single-pass membrane protein</topology>
    </subcellularLocation>
</comment>
<comment type="similarity">
    <text evidence="5">Belongs to the AAA ATPase family. MSP1 subfamily.</text>
</comment>
<gene>
    <name evidence="2" type="primary">atad1</name>
</gene>
<feature type="chain" id="PRO_0000416487" description="Outer mitochondrial transmembrane helix translocase">
    <location>
        <begin position="1"/>
        <end position="360"/>
    </location>
</feature>
<feature type="topological domain" description="Mitochondrial intermembrane" evidence="5">
    <location>
        <begin position="1"/>
        <end position="15"/>
    </location>
</feature>
<feature type="transmembrane region" description="Helical" evidence="4">
    <location>
        <begin position="16"/>
        <end position="34"/>
    </location>
</feature>
<feature type="topological domain" description="Cytoplasmic" evidence="5">
    <location>
        <begin position="35"/>
        <end position="360"/>
    </location>
</feature>
<feature type="binding site" evidence="4">
    <location>
        <begin position="133"/>
        <end position="140"/>
    </location>
    <ligand>
        <name>ATP</name>
        <dbReference type="ChEBI" id="CHEBI:30616"/>
    </ligand>
</feature>
<feature type="sequence conflict" description="In Ref. 2; AAI67903." evidence="5" ref="2">
    <original>Q</original>
    <variation>H</variation>
    <location>
        <position position="185"/>
    </location>
</feature>
<sequence>MVHGEAFSRPLSRNEVVGLIFRLTIFGAVTYFTIKWMVDAIDPTRKQKVEAQKQAEKLMRQIGVKNVKLTEYEMSIAAHLVDPLSMLVTWSDIAGLDDVITDLKDTVILPIRKRYLFENSRLLQPPKGVLLYGPPGCGKTMIAKATAKEAGCRFINLQPSTLTDKWYGESQKLAAAVFSLAVKLQPSIIFIDEIDSFLRSRSSSDHEATAMMKAQFMSLWDGLDTDFNCQVIVMGATNRPQDLDTAIMRRMPTRFHINQPSLKQREAILDLILRNESVDSHVDLMEIARGSDGFSGSDLKEMCRDAALLCVRDSVNNSSEESPCEEIRPIHQQDLLRAIDKMKRSKSATNQNVLMHVSLD</sequence>